<dbReference type="EMBL" id="U82378">
    <property type="protein sequence ID" value="AAB93516.1"/>
    <property type="molecule type" value="mRNA"/>
</dbReference>
<dbReference type="EMBL" id="U82375">
    <property type="protein sequence ID" value="AAB93513.1"/>
    <property type="molecule type" value="Genomic_DNA"/>
</dbReference>
<dbReference type="EMBL" id="BC111829">
    <property type="protein sequence ID" value="AAI11830.1"/>
    <property type="molecule type" value="mRNA"/>
</dbReference>
<dbReference type="CCDS" id="CCDS80321.1">
    <molecule id="O35979-1"/>
</dbReference>
<dbReference type="RefSeq" id="NP_001239608.1">
    <molecule id="O35979-1"/>
    <property type="nucleotide sequence ID" value="NM_001252679.1"/>
</dbReference>
<dbReference type="RefSeq" id="NP_001239609.1">
    <molecule id="O35979-1"/>
    <property type="nucleotide sequence ID" value="NM_001252680.1"/>
</dbReference>
<dbReference type="RefSeq" id="NP_001239610.1">
    <molecule id="O35979-1"/>
    <property type="nucleotide sequence ID" value="NM_001252681.1"/>
</dbReference>
<dbReference type="STRING" id="10090.ENSMUSP00000143443"/>
<dbReference type="DNASU" id="20600"/>
<dbReference type="Ensembl" id="ENSMUST00000196070.2">
    <molecule id="O35979-1"/>
    <property type="protein sequence ID" value="ENSMUSP00000143443.2"/>
    <property type="gene ID" value="ENSMUSG00000029281.14"/>
</dbReference>
<dbReference type="Ensembl" id="ENSMUST00000196477.5">
    <molecule id="O35979-1"/>
    <property type="protein sequence ID" value="ENSMUSP00000142688.2"/>
    <property type="gene ID" value="ENSMUSG00000029281.14"/>
</dbReference>
<dbReference type="GeneID" id="20600"/>
<dbReference type="KEGG" id="mmu:20600"/>
<dbReference type="UCSC" id="uc008xzm.1">
    <molecule id="O35979-1"/>
    <property type="organism name" value="mouse"/>
</dbReference>
<dbReference type="AGR" id="MGI:102762"/>
<dbReference type="CTD" id="20600"/>
<dbReference type="MGI" id="MGI:102762">
    <property type="gene designation" value="Smr2"/>
</dbReference>
<dbReference type="VEuPathDB" id="HostDB:ENSMUSG00000029281"/>
<dbReference type="GeneTree" id="ENSGT00940000164646"/>
<dbReference type="OrthoDB" id="9635060at2759"/>
<dbReference type="BioGRID-ORCS" id="20600">
    <property type="hits" value="0 hits in 76 CRISPR screens"/>
</dbReference>
<dbReference type="ChiTaRS" id="Smr2">
    <property type="organism name" value="mouse"/>
</dbReference>
<dbReference type="Proteomes" id="UP000000589">
    <property type="component" value="Chromosome 5"/>
</dbReference>
<dbReference type="Bgee" id="ENSMUSG00000029281">
    <property type="expression patterns" value="Expressed in triceps brachii and 131 other cell types or tissues"/>
</dbReference>
<dbReference type="ExpressionAtlas" id="O35979">
    <property type="expression patterns" value="differential"/>
</dbReference>
<dbReference type="GO" id="GO:0005576">
    <property type="term" value="C:extracellular region"/>
    <property type="evidence" value="ECO:0007669"/>
    <property type="project" value="UniProtKB-SubCell"/>
</dbReference>
<dbReference type="GO" id="GO:0009636">
    <property type="term" value="P:response to toxic substance"/>
    <property type="evidence" value="ECO:0007669"/>
    <property type="project" value="UniProtKB-KW"/>
</dbReference>
<dbReference type="InterPro" id="IPR026288">
    <property type="entry name" value="SMR-like"/>
</dbReference>
<dbReference type="PANTHER" id="PTHR14179">
    <property type="entry name" value="SMR1-RELATED"/>
    <property type="match status" value="1"/>
</dbReference>
<dbReference type="PANTHER" id="PTHR14179:SF14">
    <property type="entry name" value="SUBMAXILLARY GLAND ANDROGEN REGULATED PROTEIN 2 LIKE-RELATED"/>
    <property type="match status" value="1"/>
</dbReference>
<dbReference type="Pfam" id="PF15621">
    <property type="entry name" value="PROL5-SMR"/>
    <property type="match status" value="1"/>
</dbReference>
<comment type="function">
    <text>May play a role in protection or detoxification.</text>
</comment>
<comment type="subcellular location">
    <subcellularLocation>
        <location>Secreted</location>
    </subcellularLocation>
</comment>
<comment type="alternative products">
    <event type="alternative splicing"/>
    <isoform>
        <id>O35979-1</id>
        <name>Delta</name>
        <sequence type="displayed"/>
    </isoform>
    <isoform>
        <id>O09133-1</id>
        <name>Alpha</name>
        <sequence type="external"/>
    </isoform>
    <isoform>
        <id>O35982-1</id>
        <name>Beta</name>
        <sequence type="external"/>
    </isoform>
    <isoform>
        <id>O35985-1</id>
        <name>Gamma</name>
        <sequence type="external"/>
    </isoform>
    <isoform>
        <id>O35961-1</id>
        <name>Epsilon</name>
        <sequence type="external"/>
    </isoform>
</comment>
<comment type="miscellaneous">
    <molecule>Isoform Delta</molecule>
    <text>Produced by translation on another frame.</text>
</comment>
<protein>
    <recommendedName>
        <fullName>Submaxillary gland androgen-regulated protein 2, isoform delta</fullName>
    </recommendedName>
    <alternativeName>
        <fullName>Salivary protein MSG2, isoform delta</fullName>
    </alternativeName>
</protein>
<organism>
    <name type="scientific">Mus musculus</name>
    <name type="common">Mouse</name>
    <dbReference type="NCBI Taxonomy" id="10090"/>
    <lineage>
        <taxon>Eukaryota</taxon>
        <taxon>Metazoa</taxon>
        <taxon>Chordata</taxon>
        <taxon>Craniata</taxon>
        <taxon>Vertebrata</taxon>
        <taxon>Euteleostomi</taxon>
        <taxon>Mammalia</taxon>
        <taxon>Eutheria</taxon>
        <taxon>Euarchontoglires</taxon>
        <taxon>Glires</taxon>
        <taxon>Rodentia</taxon>
        <taxon>Myomorpha</taxon>
        <taxon>Muroidea</taxon>
        <taxon>Muridae</taxon>
        <taxon>Murinae</taxon>
        <taxon>Mus</taxon>
        <taxon>Mus</taxon>
    </lineage>
</organism>
<proteinExistence type="evidence at transcript level"/>
<feature type="signal peptide" evidence="1">
    <location>
        <begin position="1"/>
        <end position="22"/>
    </location>
</feature>
<feature type="chain" id="PRO_0000022377" description="Submaxillary gland androgen-regulated protein 2, isoform delta">
    <location>
        <begin position="23"/>
        <end position="143"/>
    </location>
</feature>
<feature type="region of interest" description="Disordered" evidence="2">
    <location>
        <begin position="28"/>
        <end position="52"/>
    </location>
</feature>
<feature type="region of interest" description="Disordered" evidence="2">
    <location>
        <begin position="116"/>
        <end position="143"/>
    </location>
</feature>
<feature type="compositionally biased region" description="Polar residues" evidence="2">
    <location>
        <begin position="36"/>
        <end position="45"/>
    </location>
</feature>
<feature type="compositionally biased region" description="Polar residues" evidence="2">
    <location>
        <begin position="122"/>
        <end position="143"/>
    </location>
</feature>
<reference key="1">
    <citation type="journal article" date="1997" name="Gene">
        <title>The mouse Vcs2 gene is a composite structure which evolved by gene fusion and encodes five distinct salivary mRNA species.</title>
        <authorList>
            <person name="Senorale-Pose M."/>
            <person name="Rougeon F."/>
        </authorList>
    </citation>
    <scope>NUCLEOTIDE SEQUENCE [GENOMIC DNA / MRNA] (ISOFORMS ALPHA; BETA; GAMMA; DELTA AND EPSILON)</scope>
    <source>
        <strain>BALB/cJ</strain>
        <tissue>Submandibular gland</tissue>
    </source>
</reference>
<reference key="2">
    <citation type="journal article" date="2004" name="Genome Res.">
        <title>The status, quality, and expansion of the NIH full-length cDNA project: the Mammalian Gene Collection (MGC).</title>
        <authorList>
            <consortium name="The MGC Project Team"/>
        </authorList>
    </citation>
    <scope>NUCLEOTIDE SEQUENCE [LARGE SCALE MRNA]</scope>
</reference>
<accession>O35979</accession>
<accession>Q2NKH7</accession>
<evidence type="ECO:0000255" key="1"/>
<evidence type="ECO:0000256" key="2">
    <source>
        <dbReference type="SAM" id="MobiDB-lite"/>
    </source>
</evidence>
<name>SMR2D_MOUSE</name>
<keyword id="KW-0025">Alternative splicing</keyword>
<keyword id="KW-0216">Detoxification</keyword>
<keyword id="KW-1185">Reference proteome</keyword>
<keyword id="KW-0964">Secreted</keyword>
<keyword id="KW-0732">Signal</keyword>
<gene>
    <name type="primary">Smr2</name>
    <name type="synonym">Msg2</name>
    <name type="synonym">Vcs2</name>
</gene>
<sequence>MKPLCLVFGLCVLIGCFLSSECQRGFRGQHDPTRPLSPSNPSSHFYPQPDPNRVQISQPDNIPIFMFEQPHSLNICVPPPPLYLGEEFEKLPPNTHIPYILIRPDIEPPSKYIQPVPRKKSNATPAANNFITTATAPNSTDSF</sequence>